<reference key="1">
    <citation type="journal article" date="1991" name="J. Biol. Chem.">
        <title>Cloning, expression and regulation of lithocholic acid 6beta-hydroxylase.</title>
        <authorList>
            <person name="Teixeira J."/>
            <person name="Gil G."/>
        </authorList>
    </citation>
    <scope>NUCLEOTIDE SEQUENCE [MRNA]</scope>
</reference>
<reference key="2">
    <citation type="journal article" date="1995" name="Mol. Cell. Biol.">
        <title>A STAT factor mediates the sexually dimorphic regulation of hepatic cytochrome P450 3A10/lithocholic acid 6 beta-hydroxylase gene expression by growth hormone.</title>
        <authorList>
            <person name="Subramanian A."/>
            <person name="Teixeira J."/>
            <person name="Wang J."/>
            <person name="Gil G."/>
        </authorList>
    </citation>
    <scope>NUCLEOTIDE SEQUENCE [GENOMIC DNA] OF 1-23</scope>
</reference>
<reference key="3">
    <citation type="journal article" date="1993" name="Biochem. J.">
        <title>The lithocholic acid 6 beta-hydroxylase cytochrome P-450, CYP 3A10, is an active catalyst of steroid-hormone 6 beta-hydroxylation.</title>
        <authorList>
            <person name="Chang T.K.H."/>
            <person name="Teixeira J."/>
            <person name="Gil G."/>
            <person name="Waxman D.J."/>
        </authorList>
    </citation>
    <scope>FUNCTION</scope>
    <scope>CATALYTIC ACTIVITY</scope>
    <scope>CHARACTERIZATION</scope>
</reference>
<sequence>MELIPNLSIETWVLLAISLVLIYIYGTYSHGTFKKLGIPGPKPLPFFGTILGYHDGTWKFDETCYKKYGKIWGFYDGRVPVLAIADPEIIKTVLVKECYSNFTNRRSFGPVGFMKKSITISKDEEWKRLRTLLSPAFTSGKLKEMFPIIGQYGDTLVKNLRREEEKGKPVNMKEILGAYSMDVITGTSFGVNVDSLNNPEDPFVQKARKILKFNFFDPFILSIILFPFLTTIYDLLRFSIFPRQSTNFFKKFITTMKKNRLHSNQKTRMDFFQLMMNTQNSKGKESQKALSDLEMAAQAIIFIFAGYESTSTSICLVLYELATHPDVQKKLHDEIDSALPNKAPVTYDVLMGMEYLDMVINEGLRLYPIANRLERISKKAVEINGLFIPKGITVMVPTYPLHRDPEYWPEPEEFRPERFSKENKGSIDPYVYMPFGNGPRNCIGMRFALLSMKLAVVSVLQNFTLQTCEQTENHLKFARQIILQPENPIILKIISRDKPITGA</sequence>
<accession>Q64148</accession>
<gene>
    <name type="primary">CYP3A10</name>
</gene>
<keyword id="KW-0256">Endoplasmic reticulum</keyword>
<keyword id="KW-0349">Heme</keyword>
<keyword id="KW-0408">Iron</keyword>
<keyword id="KW-0472">Membrane</keyword>
<keyword id="KW-0479">Metal-binding</keyword>
<keyword id="KW-0492">Microsome</keyword>
<keyword id="KW-0503">Monooxygenase</keyword>
<keyword id="KW-0560">Oxidoreductase</keyword>
<keyword id="KW-1185">Reference proteome</keyword>
<proteinExistence type="evidence at protein level"/>
<comment type="function">
    <text evidence="2">Catalyzes the 6 beta-hydroxylation of lithocholic acid and steroid hormones.</text>
</comment>
<comment type="catalytic activity">
    <reaction evidence="2">
        <text>lithocholate + reduced [NADPH--hemoprotein reductase] + O2 = 6beta-hydroxylithocholate + oxidized [NADPH--hemoprotein reductase] + H2O + H(+)</text>
        <dbReference type="Rhea" id="RHEA:18857"/>
        <dbReference type="Rhea" id="RHEA-COMP:11964"/>
        <dbReference type="Rhea" id="RHEA-COMP:11965"/>
        <dbReference type="ChEBI" id="CHEBI:15377"/>
        <dbReference type="ChEBI" id="CHEBI:15378"/>
        <dbReference type="ChEBI" id="CHEBI:15379"/>
        <dbReference type="ChEBI" id="CHEBI:29744"/>
        <dbReference type="ChEBI" id="CHEBI:57618"/>
        <dbReference type="ChEBI" id="CHEBI:58210"/>
        <dbReference type="ChEBI" id="CHEBI:58876"/>
        <dbReference type="EC" id="1.14.14.138"/>
    </reaction>
</comment>
<comment type="cofactor">
    <cofactor evidence="1">
        <name>heme</name>
        <dbReference type="ChEBI" id="CHEBI:30413"/>
    </cofactor>
</comment>
<comment type="subcellular location">
    <subcellularLocation>
        <location>Endoplasmic reticulum membrane</location>
        <topology>Peripheral membrane protein</topology>
    </subcellularLocation>
    <subcellularLocation>
        <location>Microsome membrane</location>
        <topology>Peripheral membrane protein</topology>
    </subcellularLocation>
</comment>
<comment type="developmental stage">
    <text>Expressed only in male hamsters.</text>
</comment>
<comment type="induction">
    <text>P450 can be induced to high levels in liver and other tissues by various foreign compounds, including drugs, pesticides, and carcinogens.</text>
</comment>
<comment type="similarity">
    <text evidence="3">Belongs to the cytochrome P450 family.</text>
</comment>
<protein>
    <recommendedName>
        <fullName>Lithocholate 6-beta-hydroxylase</fullName>
        <shortName>6 beta-hydroxylase</shortName>
        <ecNumber evidence="2">1.14.14.138</ecNumber>
    </recommendedName>
    <alternativeName>
        <fullName>CYPIIIA10</fullName>
    </alternativeName>
    <alternativeName>
        <fullName>Cytochrome P450 3A10</fullName>
    </alternativeName>
</protein>
<evidence type="ECO:0000250" key="1"/>
<evidence type="ECO:0000269" key="2">
    <source>
    </source>
</evidence>
<evidence type="ECO:0000305" key="3"/>
<dbReference type="EC" id="1.14.14.138" evidence="2"/>
<dbReference type="EMBL" id="M73992">
    <property type="status" value="NOT_ANNOTATED_CDS"/>
    <property type="molecule type" value="mRNA"/>
</dbReference>
<dbReference type="EMBL" id="S79317">
    <property type="protein sequence ID" value="AAB35091.1"/>
    <property type="molecule type" value="Genomic_DNA"/>
</dbReference>
<dbReference type="PIR" id="A40843">
    <property type="entry name" value="A40843"/>
</dbReference>
<dbReference type="SMR" id="Q64148"/>
<dbReference type="STRING" id="10036.ENSMAUP00000011079"/>
<dbReference type="Ensembl" id="ENSMAUT00000014959">
    <property type="protein sequence ID" value="ENSMAUP00000011079"/>
    <property type="gene ID" value="ENSMAUG00000011782"/>
</dbReference>
<dbReference type="GeneID" id="101831958"/>
<dbReference type="KEGG" id="maua:101831958"/>
<dbReference type="eggNOG" id="KOG0158">
    <property type="taxonomic scope" value="Eukaryota"/>
</dbReference>
<dbReference type="OrthoDB" id="1470350at2759"/>
<dbReference type="Proteomes" id="UP000189706">
    <property type="component" value="Unplaced"/>
</dbReference>
<dbReference type="GO" id="GO:0005789">
    <property type="term" value="C:endoplasmic reticulum membrane"/>
    <property type="evidence" value="ECO:0007669"/>
    <property type="project" value="UniProtKB-SubCell"/>
</dbReference>
<dbReference type="GO" id="GO:0020037">
    <property type="term" value="F:heme binding"/>
    <property type="evidence" value="ECO:0007669"/>
    <property type="project" value="InterPro"/>
</dbReference>
<dbReference type="GO" id="GO:0005506">
    <property type="term" value="F:iron ion binding"/>
    <property type="evidence" value="ECO:0007669"/>
    <property type="project" value="InterPro"/>
</dbReference>
<dbReference type="GO" id="GO:0033777">
    <property type="term" value="F:lithocholate 6beta-hydroxylase activity"/>
    <property type="evidence" value="ECO:0007669"/>
    <property type="project" value="UniProtKB-EC"/>
</dbReference>
<dbReference type="GO" id="GO:0016712">
    <property type="term" value="F:oxidoreductase activity, acting on paired donors, with incorporation or reduction of molecular oxygen, reduced flavin or flavoprotein as one donor, and incorporation of one atom of oxygen"/>
    <property type="evidence" value="ECO:0007669"/>
    <property type="project" value="InterPro"/>
</dbReference>
<dbReference type="GO" id="GO:0050649">
    <property type="term" value="F:testosterone 6-beta-hydroxylase activity"/>
    <property type="evidence" value="ECO:0007669"/>
    <property type="project" value="TreeGrafter"/>
</dbReference>
<dbReference type="GO" id="GO:0070989">
    <property type="term" value="P:oxidative demethylation"/>
    <property type="evidence" value="ECO:0007669"/>
    <property type="project" value="TreeGrafter"/>
</dbReference>
<dbReference type="GO" id="GO:0008202">
    <property type="term" value="P:steroid metabolic process"/>
    <property type="evidence" value="ECO:0007669"/>
    <property type="project" value="TreeGrafter"/>
</dbReference>
<dbReference type="CDD" id="cd20650">
    <property type="entry name" value="CYP3A"/>
    <property type="match status" value="1"/>
</dbReference>
<dbReference type="FunFam" id="1.10.630.10:FF:000096">
    <property type="entry name" value="Cytochrome P450 3A4"/>
    <property type="match status" value="1"/>
</dbReference>
<dbReference type="Gene3D" id="1.10.630.10">
    <property type="entry name" value="Cytochrome P450"/>
    <property type="match status" value="1"/>
</dbReference>
<dbReference type="InterPro" id="IPR001128">
    <property type="entry name" value="Cyt_P450"/>
</dbReference>
<dbReference type="InterPro" id="IPR017972">
    <property type="entry name" value="Cyt_P450_CS"/>
</dbReference>
<dbReference type="InterPro" id="IPR008072">
    <property type="entry name" value="Cyt_P450_E_CYP3A"/>
</dbReference>
<dbReference type="InterPro" id="IPR002402">
    <property type="entry name" value="Cyt_P450_E_grp-II"/>
</dbReference>
<dbReference type="InterPro" id="IPR036396">
    <property type="entry name" value="Cyt_P450_sf"/>
</dbReference>
<dbReference type="InterPro" id="IPR050705">
    <property type="entry name" value="Cytochrome_P450_3A"/>
</dbReference>
<dbReference type="PANTHER" id="PTHR24302:SF8">
    <property type="entry name" value="CYTOCHROME P450 3A-RELATED"/>
    <property type="match status" value="1"/>
</dbReference>
<dbReference type="PANTHER" id="PTHR24302">
    <property type="entry name" value="CYTOCHROME P450 FAMILY 3"/>
    <property type="match status" value="1"/>
</dbReference>
<dbReference type="Pfam" id="PF00067">
    <property type="entry name" value="p450"/>
    <property type="match status" value="1"/>
</dbReference>
<dbReference type="PRINTS" id="PR00464">
    <property type="entry name" value="EP450II"/>
</dbReference>
<dbReference type="PRINTS" id="PR01689">
    <property type="entry name" value="EP450IICYP3A"/>
</dbReference>
<dbReference type="PRINTS" id="PR00385">
    <property type="entry name" value="P450"/>
</dbReference>
<dbReference type="SUPFAM" id="SSF48264">
    <property type="entry name" value="Cytochrome P450"/>
    <property type="match status" value="1"/>
</dbReference>
<dbReference type="PROSITE" id="PS00086">
    <property type="entry name" value="CYTOCHROME_P450"/>
    <property type="match status" value="1"/>
</dbReference>
<organism>
    <name type="scientific">Mesocricetus auratus</name>
    <name type="common">Golden hamster</name>
    <dbReference type="NCBI Taxonomy" id="10036"/>
    <lineage>
        <taxon>Eukaryota</taxon>
        <taxon>Metazoa</taxon>
        <taxon>Chordata</taxon>
        <taxon>Craniata</taxon>
        <taxon>Vertebrata</taxon>
        <taxon>Euteleostomi</taxon>
        <taxon>Mammalia</taxon>
        <taxon>Eutheria</taxon>
        <taxon>Euarchontoglires</taxon>
        <taxon>Glires</taxon>
        <taxon>Rodentia</taxon>
        <taxon>Myomorpha</taxon>
        <taxon>Muroidea</taxon>
        <taxon>Cricetidae</taxon>
        <taxon>Cricetinae</taxon>
        <taxon>Mesocricetus</taxon>
    </lineage>
</organism>
<feature type="chain" id="PRO_0000051793" description="Lithocholate 6-beta-hydroxylase">
    <location>
        <begin position="1"/>
        <end position="503"/>
    </location>
</feature>
<feature type="binding site" description="axial binding residue" evidence="1">
    <location>
        <position position="442"/>
    </location>
    <ligand>
        <name>heme</name>
        <dbReference type="ChEBI" id="CHEBI:30413"/>
    </ligand>
    <ligandPart>
        <name>Fe</name>
        <dbReference type="ChEBI" id="CHEBI:18248"/>
    </ligandPart>
</feature>
<name>CP3AA_MESAU</name>